<dbReference type="EMBL" id="CP000090">
    <property type="protein sequence ID" value="AAZ59506.1"/>
    <property type="molecule type" value="Genomic_DNA"/>
</dbReference>
<dbReference type="STRING" id="264198.Reut_A0124"/>
<dbReference type="KEGG" id="reu:Reut_A0124"/>
<dbReference type="eggNOG" id="COG5487">
    <property type="taxonomic scope" value="Bacteria"/>
</dbReference>
<dbReference type="HOGENOM" id="CLU_187346_0_1_4"/>
<dbReference type="GO" id="GO:0005886">
    <property type="term" value="C:plasma membrane"/>
    <property type="evidence" value="ECO:0007669"/>
    <property type="project" value="UniProtKB-SubCell"/>
</dbReference>
<dbReference type="HAMAP" id="MF_01361">
    <property type="entry name" value="UPF0391"/>
    <property type="match status" value="1"/>
</dbReference>
<dbReference type="InterPro" id="IPR009760">
    <property type="entry name" value="DUF1328"/>
</dbReference>
<dbReference type="NCBIfam" id="NF010226">
    <property type="entry name" value="PRK13682.1-1"/>
    <property type="match status" value="1"/>
</dbReference>
<dbReference type="NCBIfam" id="NF010229">
    <property type="entry name" value="PRK13682.1-4"/>
    <property type="match status" value="1"/>
</dbReference>
<dbReference type="Pfam" id="PF07043">
    <property type="entry name" value="DUF1328"/>
    <property type="match status" value="1"/>
</dbReference>
<dbReference type="PIRSF" id="PIRSF036466">
    <property type="entry name" value="UCP036466"/>
    <property type="match status" value="1"/>
</dbReference>
<feature type="chain" id="PRO_0000256766" description="UPF0391 membrane protein Reut_A0124">
    <location>
        <begin position="1"/>
        <end position="54"/>
    </location>
</feature>
<feature type="transmembrane region" description="Helical" evidence="1">
    <location>
        <begin position="5"/>
        <end position="25"/>
    </location>
</feature>
<feature type="transmembrane region" description="Helical" evidence="1">
    <location>
        <begin position="30"/>
        <end position="50"/>
    </location>
</feature>
<reference key="1">
    <citation type="journal article" date="2010" name="PLoS ONE">
        <title>The complete multipartite genome sequence of Cupriavidus necator JMP134, a versatile pollutant degrader.</title>
        <authorList>
            <person name="Lykidis A."/>
            <person name="Perez-Pantoja D."/>
            <person name="Ledger T."/>
            <person name="Mavromatis K."/>
            <person name="Anderson I.J."/>
            <person name="Ivanova N.N."/>
            <person name="Hooper S.D."/>
            <person name="Lapidus A."/>
            <person name="Lucas S."/>
            <person name="Gonzalez B."/>
            <person name="Kyrpides N.C."/>
        </authorList>
    </citation>
    <scope>NUCLEOTIDE SEQUENCE [LARGE SCALE GENOMIC DNA]</scope>
    <source>
        <strain>JMP134 / LMG 1197</strain>
    </source>
</reference>
<gene>
    <name type="ordered locus">Reut_A0124</name>
</gene>
<name>Y124_CUPPJ</name>
<comment type="subcellular location">
    <subcellularLocation>
        <location evidence="1">Cell membrane</location>
        <topology evidence="1">Multi-pass membrane protein</topology>
    </subcellularLocation>
</comment>
<comment type="similarity">
    <text evidence="1">Belongs to the UPF0391 family.</text>
</comment>
<organism>
    <name type="scientific">Cupriavidus pinatubonensis (strain JMP 134 / LMG 1197)</name>
    <name type="common">Cupriavidus necator (strain JMP 134)</name>
    <dbReference type="NCBI Taxonomy" id="264198"/>
    <lineage>
        <taxon>Bacteria</taxon>
        <taxon>Pseudomonadati</taxon>
        <taxon>Pseudomonadota</taxon>
        <taxon>Betaproteobacteria</taxon>
        <taxon>Burkholderiales</taxon>
        <taxon>Burkholderiaceae</taxon>
        <taxon>Cupriavidus</taxon>
    </lineage>
</organism>
<sequence length="54" mass="5802">MLQYALVFFVIALIAAVFGFGGIAAGAVEIAKILFFIFLIVALVTAVMGLVRRR</sequence>
<protein>
    <recommendedName>
        <fullName evidence="1">UPF0391 membrane protein Reut_A0124</fullName>
    </recommendedName>
</protein>
<evidence type="ECO:0000255" key="1">
    <source>
        <dbReference type="HAMAP-Rule" id="MF_01361"/>
    </source>
</evidence>
<proteinExistence type="inferred from homology"/>
<keyword id="KW-1003">Cell membrane</keyword>
<keyword id="KW-0472">Membrane</keyword>
<keyword id="KW-0812">Transmembrane</keyword>
<keyword id="KW-1133">Transmembrane helix</keyword>
<accession>Q477C7</accession>